<feature type="chain" id="PRO_0000317931" description="Ubiquitin-like protein ATG12">
    <location>
        <begin position="1"/>
        <end position="176"/>
    </location>
</feature>
<feature type="region of interest" description="Disordered" evidence="2">
    <location>
        <begin position="1"/>
        <end position="59"/>
    </location>
</feature>
<feature type="compositionally biased region" description="Low complexity" evidence="2">
    <location>
        <begin position="1"/>
        <end position="14"/>
    </location>
</feature>
<feature type="compositionally biased region" description="Polar residues" evidence="2">
    <location>
        <begin position="15"/>
        <end position="27"/>
    </location>
</feature>
<feature type="compositionally biased region" description="Polar residues" evidence="2">
    <location>
        <begin position="35"/>
        <end position="47"/>
    </location>
</feature>
<feature type="cross-link" description="Glycyl lysine isopeptide (Gly-Lys) (interchain with K-158 in atg5)" evidence="1">
    <location>
        <position position="176"/>
    </location>
</feature>
<name>ATG12_ASPOR</name>
<sequence length="176" mass="19050">MDPSSPQHPSQDSPRPTQNLSAGSRASLSHRPASRKQSSDSTSNNKNAPIPDDEHGADMPLTMSASVVLTSLPRDAHQALADAEAVDKGKVTVRFQPLASAPILKNKVFKISASQKFETVVKFLRKKLDCKETDSVFCYVNSVFAPGLDEGVGGLWRCFKVDDQLIVSYSMTPAFG</sequence>
<evidence type="ECO:0000250" key="1"/>
<evidence type="ECO:0000256" key="2">
    <source>
        <dbReference type="SAM" id="MobiDB-lite"/>
    </source>
</evidence>
<evidence type="ECO:0000305" key="3"/>
<protein>
    <recommendedName>
        <fullName>Ubiquitin-like protein ATG12</fullName>
    </recommendedName>
    <alternativeName>
        <fullName>Autophagy-related protein 12</fullName>
    </alternativeName>
</protein>
<organism>
    <name type="scientific">Aspergillus oryzae (strain ATCC 42149 / RIB 40)</name>
    <name type="common">Yellow koji mold</name>
    <dbReference type="NCBI Taxonomy" id="510516"/>
    <lineage>
        <taxon>Eukaryota</taxon>
        <taxon>Fungi</taxon>
        <taxon>Dikarya</taxon>
        <taxon>Ascomycota</taxon>
        <taxon>Pezizomycotina</taxon>
        <taxon>Eurotiomycetes</taxon>
        <taxon>Eurotiomycetidae</taxon>
        <taxon>Eurotiales</taxon>
        <taxon>Aspergillaceae</taxon>
        <taxon>Aspergillus</taxon>
        <taxon>Aspergillus subgen. Circumdati</taxon>
    </lineage>
</organism>
<comment type="function">
    <text evidence="1">Ubiquitin-like protein involved in cytoplasm to vacuole transport (Cvt), autophagy vesicles formation, mitophagy, and nucleophagy. Conjugation with atg5 through a ubiquitin-like conjugating system involving also atg7 as an E1-like activating enzyme and atg10 as an E2-like conjugating enzyme, is essential for its function. The atg12-atg5 conjugate functions as an E3-like enzyme which is required for lipidation of atg8 and atg8 association to the vesicle membranes (By similarity).</text>
</comment>
<comment type="subunit">
    <text evidence="1">Forms a conjugate with atg5.</text>
</comment>
<comment type="subcellular location">
    <subcellularLocation>
        <location evidence="1">Preautophagosomal structure membrane</location>
        <topology evidence="1">Peripheral membrane protein</topology>
    </subcellularLocation>
</comment>
<comment type="similarity">
    <text evidence="3">Belongs to the ATG12 family.</text>
</comment>
<proteinExistence type="inferred from homology"/>
<keyword id="KW-0072">Autophagy</keyword>
<keyword id="KW-1017">Isopeptide bond</keyword>
<keyword id="KW-0472">Membrane</keyword>
<keyword id="KW-0653">Protein transport</keyword>
<keyword id="KW-1185">Reference proteome</keyword>
<keyword id="KW-0813">Transport</keyword>
<keyword id="KW-0833">Ubl conjugation pathway</keyword>
<reference key="1">
    <citation type="journal article" date="2005" name="Nature">
        <title>Genome sequencing and analysis of Aspergillus oryzae.</title>
        <authorList>
            <person name="Machida M."/>
            <person name="Asai K."/>
            <person name="Sano M."/>
            <person name="Tanaka T."/>
            <person name="Kumagai T."/>
            <person name="Terai G."/>
            <person name="Kusumoto K."/>
            <person name="Arima T."/>
            <person name="Akita O."/>
            <person name="Kashiwagi Y."/>
            <person name="Abe K."/>
            <person name="Gomi K."/>
            <person name="Horiuchi H."/>
            <person name="Kitamoto K."/>
            <person name="Kobayashi T."/>
            <person name="Takeuchi M."/>
            <person name="Denning D.W."/>
            <person name="Galagan J.E."/>
            <person name="Nierman W.C."/>
            <person name="Yu J."/>
            <person name="Archer D.B."/>
            <person name="Bennett J.W."/>
            <person name="Bhatnagar D."/>
            <person name="Cleveland T.E."/>
            <person name="Fedorova N.D."/>
            <person name="Gotoh O."/>
            <person name="Horikawa H."/>
            <person name="Hosoyama A."/>
            <person name="Ichinomiya M."/>
            <person name="Igarashi R."/>
            <person name="Iwashita K."/>
            <person name="Juvvadi P.R."/>
            <person name="Kato M."/>
            <person name="Kato Y."/>
            <person name="Kin T."/>
            <person name="Kokubun A."/>
            <person name="Maeda H."/>
            <person name="Maeyama N."/>
            <person name="Maruyama J."/>
            <person name="Nagasaki H."/>
            <person name="Nakajima T."/>
            <person name="Oda K."/>
            <person name="Okada K."/>
            <person name="Paulsen I."/>
            <person name="Sakamoto K."/>
            <person name="Sawano T."/>
            <person name="Takahashi M."/>
            <person name="Takase K."/>
            <person name="Terabayashi Y."/>
            <person name="Wortman J.R."/>
            <person name="Yamada O."/>
            <person name="Yamagata Y."/>
            <person name="Anazawa H."/>
            <person name="Hata Y."/>
            <person name="Koide Y."/>
            <person name="Komori T."/>
            <person name="Koyama Y."/>
            <person name="Minetoki T."/>
            <person name="Suharnan S."/>
            <person name="Tanaka A."/>
            <person name="Isono K."/>
            <person name="Kuhara S."/>
            <person name="Ogasawara N."/>
            <person name="Kikuchi H."/>
        </authorList>
    </citation>
    <scope>NUCLEOTIDE SEQUENCE [LARGE SCALE GENOMIC DNA]</scope>
    <source>
        <strain>ATCC 42149 / RIB 40</strain>
    </source>
</reference>
<gene>
    <name type="primary">atg12</name>
    <name type="ORF">AO090001000593</name>
</gene>
<dbReference type="EMBL" id="BA000050">
    <property type="protein sequence ID" value="BAE57099.1"/>
    <property type="molecule type" value="Genomic_DNA"/>
</dbReference>
<dbReference type="RefSeq" id="XP_001819101.1">
    <property type="nucleotide sequence ID" value="XM_001819049.2"/>
</dbReference>
<dbReference type="SMR" id="Q2UMW6"/>
<dbReference type="STRING" id="510516.Q2UMW6"/>
<dbReference type="EnsemblFungi" id="BAE57099">
    <property type="protein sequence ID" value="BAE57099"/>
    <property type="gene ID" value="AO090001000593"/>
</dbReference>
<dbReference type="GeneID" id="5991072"/>
<dbReference type="KEGG" id="aor:AO090001000593"/>
<dbReference type="VEuPathDB" id="FungiDB:AO090001000593"/>
<dbReference type="HOGENOM" id="CLU_106795_1_2_1"/>
<dbReference type="OMA" id="DLPMNMS"/>
<dbReference type="OrthoDB" id="69252at5052"/>
<dbReference type="Proteomes" id="UP000006564">
    <property type="component" value="Chromosome 2"/>
</dbReference>
<dbReference type="GO" id="GO:0034274">
    <property type="term" value="C:Atg12-Atg5-Atg16 complex"/>
    <property type="evidence" value="ECO:0007669"/>
    <property type="project" value="TreeGrafter"/>
</dbReference>
<dbReference type="GO" id="GO:0000421">
    <property type="term" value="C:autophagosome membrane"/>
    <property type="evidence" value="ECO:0007669"/>
    <property type="project" value="TreeGrafter"/>
</dbReference>
<dbReference type="GO" id="GO:0034045">
    <property type="term" value="C:phagophore assembly site membrane"/>
    <property type="evidence" value="ECO:0007669"/>
    <property type="project" value="UniProtKB-SubCell"/>
</dbReference>
<dbReference type="GO" id="GO:0019776">
    <property type="term" value="F:Atg8-family ligase activity"/>
    <property type="evidence" value="ECO:0007669"/>
    <property type="project" value="TreeGrafter"/>
</dbReference>
<dbReference type="GO" id="GO:0000045">
    <property type="term" value="P:autophagosome assembly"/>
    <property type="evidence" value="ECO:0007669"/>
    <property type="project" value="InterPro"/>
</dbReference>
<dbReference type="GO" id="GO:0097352">
    <property type="term" value="P:autophagosome maturation"/>
    <property type="evidence" value="ECO:0007669"/>
    <property type="project" value="TreeGrafter"/>
</dbReference>
<dbReference type="GO" id="GO:0000422">
    <property type="term" value="P:autophagy of mitochondrion"/>
    <property type="evidence" value="ECO:0007669"/>
    <property type="project" value="TreeGrafter"/>
</dbReference>
<dbReference type="GO" id="GO:0061723">
    <property type="term" value="P:glycophagy"/>
    <property type="evidence" value="ECO:0007669"/>
    <property type="project" value="TreeGrafter"/>
</dbReference>
<dbReference type="GO" id="GO:0034727">
    <property type="term" value="P:piecemeal microautophagy of the nucleus"/>
    <property type="evidence" value="ECO:0007669"/>
    <property type="project" value="TreeGrafter"/>
</dbReference>
<dbReference type="GO" id="GO:0015031">
    <property type="term" value="P:protein transport"/>
    <property type="evidence" value="ECO:0007669"/>
    <property type="project" value="UniProtKB-KW"/>
</dbReference>
<dbReference type="CDD" id="cd01612">
    <property type="entry name" value="Ubl_ATG12"/>
    <property type="match status" value="1"/>
</dbReference>
<dbReference type="FunFam" id="3.10.20.90:FF:000148">
    <property type="entry name" value="Ubiquitin-like protein ATG12"/>
    <property type="match status" value="1"/>
</dbReference>
<dbReference type="Gene3D" id="3.10.20.90">
    <property type="entry name" value="Phosphatidylinositol 3-kinase Catalytic Subunit, Chain A, domain 1"/>
    <property type="match status" value="1"/>
</dbReference>
<dbReference type="InterPro" id="IPR007242">
    <property type="entry name" value="Atg12"/>
</dbReference>
<dbReference type="InterPro" id="IPR029071">
    <property type="entry name" value="Ubiquitin-like_domsf"/>
</dbReference>
<dbReference type="PANTHER" id="PTHR13385">
    <property type="entry name" value="AUTOPHAGY PROTEIN 12"/>
    <property type="match status" value="1"/>
</dbReference>
<dbReference type="PANTHER" id="PTHR13385:SF0">
    <property type="entry name" value="UBIQUITIN-LIKE PROTEIN ATG12"/>
    <property type="match status" value="1"/>
</dbReference>
<dbReference type="Pfam" id="PF04110">
    <property type="entry name" value="APG12"/>
    <property type="match status" value="1"/>
</dbReference>
<dbReference type="SUPFAM" id="SSF54236">
    <property type="entry name" value="Ubiquitin-like"/>
    <property type="match status" value="1"/>
</dbReference>
<accession>Q2UMW6</accession>